<gene>
    <name evidence="1" type="primary">astB</name>
    <name type="ordered locus">EcE24377A_1967</name>
</gene>
<dbReference type="EC" id="3.5.3.23" evidence="1"/>
<dbReference type="EMBL" id="CP000800">
    <property type="protein sequence ID" value="ABV17269.1"/>
    <property type="molecule type" value="Genomic_DNA"/>
</dbReference>
<dbReference type="RefSeq" id="WP_000994953.1">
    <property type="nucleotide sequence ID" value="NC_009801.1"/>
</dbReference>
<dbReference type="SMR" id="A7ZML3"/>
<dbReference type="KEGG" id="ecw:EcE24377A_1967"/>
<dbReference type="HOGENOM" id="CLU_053835_0_0_6"/>
<dbReference type="UniPathway" id="UPA00185">
    <property type="reaction ID" value="UER00280"/>
</dbReference>
<dbReference type="Proteomes" id="UP000001122">
    <property type="component" value="Chromosome"/>
</dbReference>
<dbReference type="GO" id="GO:0009015">
    <property type="term" value="F:N-succinylarginine dihydrolase activity"/>
    <property type="evidence" value="ECO:0007669"/>
    <property type="project" value="UniProtKB-UniRule"/>
</dbReference>
<dbReference type="GO" id="GO:0019544">
    <property type="term" value="P:arginine catabolic process to glutamate"/>
    <property type="evidence" value="ECO:0007669"/>
    <property type="project" value="UniProtKB-UniRule"/>
</dbReference>
<dbReference type="GO" id="GO:0019545">
    <property type="term" value="P:arginine catabolic process to succinate"/>
    <property type="evidence" value="ECO:0007669"/>
    <property type="project" value="UniProtKB-UniRule"/>
</dbReference>
<dbReference type="FunFam" id="3.75.10.20:FF:000001">
    <property type="entry name" value="N-succinylarginine dihydrolase"/>
    <property type="match status" value="1"/>
</dbReference>
<dbReference type="Gene3D" id="3.75.10.20">
    <property type="entry name" value="Succinylarginine dihydrolase"/>
    <property type="match status" value="1"/>
</dbReference>
<dbReference type="HAMAP" id="MF_01172">
    <property type="entry name" value="AstB"/>
    <property type="match status" value="1"/>
</dbReference>
<dbReference type="InterPro" id="IPR037031">
    <property type="entry name" value="AstB_sf"/>
</dbReference>
<dbReference type="InterPro" id="IPR007079">
    <property type="entry name" value="SuccinylArg_d-Hdrlase_AstB"/>
</dbReference>
<dbReference type="NCBIfam" id="TIGR03241">
    <property type="entry name" value="arg_catab_astB"/>
    <property type="match status" value="1"/>
</dbReference>
<dbReference type="NCBIfam" id="NF009789">
    <property type="entry name" value="PRK13281.1"/>
    <property type="match status" value="1"/>
</dbReference>
<dbReference type="PANTHER" id="PTHR30420">
    <property type="entry name" value="N-SUCCINYLARGININE DIHYDROLASE"/>
    <property type="match status" value="1"/>
</dbReference>
<dbReference type="PANTHER" id="PTHR30420:SF2">
    <property type="entry name" value="N-SUCCINYLARGININE DIHYDROLASE"/>
    <property type="match status" value="1"/>
</dbReference>
<dbReference type="Pfam" id="PF04996">
    <property type="entry name" value="AstB"/>
    <property type="match status" value="1"/>
</dbReference>
<dbReference type="SUPFAM" id="SSF55909">
    <property type="entry name" value="Pentein"/>
    <property type="match status" value="1"/>
</dbReference>
<protein>
    <recommendedName>
        <fullName evidence="1">N-succinylarginine dihydrolase</fullName>
        <ecNumber evidence="1">3.5.3.23</ecNumber>
    </recommendedName>
</protein>
<proteinExistence type="inferred from homology"/>
<feature type="chain" id="PRO_1000065723" description="N-succinylarginine dihydrolase">
    <location>
        <begin position="1"/>
        <end position="447"/>
    </location>
</feature>
<feature type="active site" evidence="1">
    <location>
        <position position="174"/>
    </location>
</feature>
<feature type="active site" evidence="1">
    <location>
        <position position="248"/>
    </location>
</feature>
<feature type="active site" description="Nucleophile" evidence="1">
    <location>
        <position position="365"/>
    </location>
</feature>
<feature type="binding site" evidence="1">
    <location>
        <begin position="19"/>
        <end position="28"/>
    </location>
    <ligand>
        <name>substrate</name>
    </ligand>
</feature>
<feature type="binding site" evidence="1">
    <location>
        <position position="110"/>
    </location>
    <ligand>
        <name>substrate</name>
    </ligand>
</feature>
<feature type="binding site" evidence="1">
    <location>
        <begin position="137"/>
        <end position="138"/>
    </location>
    <ligand>
        <name>substrate</name>
    </ligand>
</feature>
<feature type="binding site" evidence="1">
    <location>
        <position position="212"/>
    </location>
    <ligand>
        <name>substrate</name>
    </ligand>
</feature>
<feature type="binding site" evidence="1">
    <location>
        <position position="250"/>
    </location>
    <ligand>
        <name>substrate</name>
    </ligand>
</feature>
<feature type="binding site" evidence="1">
    <location>
        <position position="359"/>
    </location>
    <ligand>
        <name>substrate</name>
    </ligand>
</feature>
<keyword id="KW-0056">Arginine metabolism</keyword>
<keyword id="KW-0378">Hydrolase</keyword>
<keyword id="KW-1185">Reference proteome</keyword>
<name>ASTB_ECO24</name>
<accession>A7ZML3</accession>
<sequence>MNAWEVNFDGLVGLTHHYAGLSFGNEASTCHRFQVSNPRQAAKQGLLKMKALADAGFPQAVIPPHERPFIPVLRQLGFSGSDEQVLEKVARQAPHWLSSVSSASPMWVANAATIAPSADTLDGKVHLTVANLNNKFHRSLEAHVTESLLKAIFNDKEKFSVHSALPQVALLGDEGAANHNRLGGHYGEPGMQLFVYGREEGNDTRPSRYPARQTREASEAVARLNQVNPQQVIFAQQNPDVIDQGVFHNDVIAVSNRQVLFCHQQAFARQSQLLANLRARVNGFMAIEVPATQVSVSDAVSTYLFNSQLLSRDDGSMMLVLPQECREHAGVWGYLNELLAADNPISELKVFDLRESMANGGGPACLRLRVVLTEEERRAVNPAVMMNDTLFNALNDWVDRYYRDRLTAADLADPQLLRGGREALDILSQLLNLGSVYPFQREGGGNG</sequence>
<reference key="1">
    <citation type="journal article" date="2008" name="J. Bacteriol.">
        <title>The pangenome structure of Escherichia coli: comparative genomic analysis of E. coli commensal and pathogenic isolates.</title>
        <authorList>
            <person name="Rasko D.A."/>
            <person name="Rosovitz M.J."/>
            <person name="Myers G.S.A."/>
            <person name="Mongodin E.F."/>
            <person name="Fricke W.F."/>
            <person name="Gajer P."/>
            <person name="Crabtree J."/>
            <person name="Sebaihia M."/>
            <person name="Thomson N.R."/>
            <person name="Chaudhuri R."/>
            <person name="Henderson I.R."/>
            <person name="Sperandio V."/>
            <person name="Ravel J."/>
        </authorList>
    </citation>
    <scope>NUCLEOTIDE SEQUENCE [LARGE SCALE GENOMIC DNA]</scope>
    <source>
        <strain>E24377A / ETEC</strain>
    </source>
</reference>
<evidence type="ECO:0000255" key="1">
    <source>
        <dbReference type="HAMAP-Rule" id="MF_01172"/>
    </source>
</evidence>
<organism>
    <name type="scientific">Escherichia coli O139:H28 (strain E24377A / ETEC)</name>
    <dbReference type="NCBI Taxonomy" id="331111"/>
    <lineage>
        <taxon>Bacteria</taxon>
        <taxon>Pseudomonadati</taxon>
        <taxon>Pseudomonadota</taxon>
        <taxon>Gammaproteobacteria</taxon>
        <taxon>Enterobacterales</taxon>
        <taxon>Enterobacteriaceae</taxon>
        <taxon>Escherichia</taxon>
    </lineage>
</organism>
<comment type="function">
    <text evidence="1">Catalyzes the hydrolysis of N(2)-succinylarginine into N(2)-succinylornithine, ammonia and CO(2).</text>
</comment>
<comment type="catalytic activity">
    <reaction evidence="1">
        <text>N(2)-succinyl-L-arginine + 2 H2O + 2 H(+) = N(2)-succinyl-L-ornithine + 2 NH4(+) + CO2</text>
        <dbReference type="Rhea" id="RHEA:19533"/>
        <dbReference type="ChEBI" id="CHEBI:15377"/>
        <dbReference type="ChEBI" id="CHEBI:15378"/>
        <dbReference type="ChEBI" id="CHEBI:16526"/>
        <dbReference type="ChEBI" id="CHEBI:28938"/>
        <dbReference type="ChEBI" id="CHEBI:58241"/>
        <dbReference type="ChEBI" id="CHEBI:58514"/>
        <dbReference type="EC" id="3.5.3.23"/>
    </reaction>
</comment>
<comment type="pathway">
    <text evidence="1">Amino-acid degradation; L-arginine degradation via AST pathway; L-glutamate and succinate from L-arginine: step 2/5.</text>
</comment>
<comment type="subunit">
    <text evidence="1">Homodimer.</text>
</comment>
<comment type="similarity">
    <text evidence="1">Belongs to the succinylarginine dihydrolase family.</text>
</comment>